<organism>
    <name type="scientific">Homo sapiens</name>
    <name type="common">Human</name>
    <dbReference type="NCBI Taxonomy" id="9606"/>
    <lineage>
        <taxon>Eukaryota</taxon>
        <taxon>Metazoa</taxon>
        <taxon>Chordata</taxon>
        <taxon>Craniata</taxon>
        <taxon>Vertebrata</taxon>
        <taxon>Euteleostomi</taxon>
        <taxon>Mammalia</taxon>
        <taxon>Eutheria</taxon>
        <taxon>Euarchontoglires</taxon>
        <taxon>Primates</taxon>
        <taxon>Haplorrhini</taxon>
        <taxon>Catarrhini</taxon>
        <taxon>Hominidae</taxon>
        <taxon>Homo</taxon>
    </lineage>
</organism>
<comment type="function">
    <text>Essential for the control of the cell cycle at the G2/M (mitosis) transition.</text>
</comment>
<comment type="subunit">
    <text>Interacts with the CDK1 protein kinase to form a serine/threonine kinase holoenzyme complex also known as maturation promoting factor (MPF). The cyclin subunit imparts substrate specificity to the complex.</text>
</comment>
<comment type="interaction">
    <interactant intactId="EBI-375024">
        <id>O95067</id>
    </interactant>
    <interactant intactId="EBI-375096">
        <id>P24941</id>
        <label>CDK2</label>
    </interactant>
    <organismsDiffer>false</organismsDiffer>
    <experiments>6</experiments>
</comment>
<comment type="interaction">
    <interactant intactId="EBI-375024">
        <id>O95067</id>
    </interactant>
    <interactant intactId="EBI-375077">
        <id>P38936</id>
        <label>CDKN1A</label>
    </interactant>
    <organismsDiffer>false</organismsDiffer>
    <experiments>2</experiments>
</comment>
<comment type="interaction">
    <interactant intactId="EBI-375024">
        <id>O95067</id>
    </interactant>
    <interactant intactId="EBI-350432">
        <id>P21333</id>
        <label>FLNA</label>
    </interactant>
    <organismsDiffer>false</organismsDiffer>
    <experiments>8</experiments>
</comment>
<comment type="developmental stage">
    <text>Accumulates steadily during G2 and is abruptly destroyed at mitosis.</text>
</comment>
<comment type="similarity">
    <text evidence="2">Belongs to the cyclin family. Cyclin AB subfamily.</text>
</comment>
<protein>
    <recommendedName>
        <fullName>G2/mitotic-specific cyclin-B2</fullName>
    </recommendedName>
</protein>
<name>CCNB2_HUMAN</name>
<sequence length="398" mass="45282">MALLRRPTVSSDLENIDTGVNSKVKSHVTIRRTVLEEIGNRVTTRAAQVAKKAQNTKVPVQPTKTTNVNKQLKPTASVKPVQMEKLAPKGPSPTPEDVSMKEENLCQAFSDALLCKIEDIDNEDWENPQLCSDYVKDIYQYLRQLEVLQSINPHFLDGRDINGRMRAILVDWLVQVHSKFRLLQETLYMCVGIMDRFLQVQPVSRKKLQLVGITALLLASKYEEMFSPNIEDFVYITDNAYTSSQIREMETLILKELKFELGRPLPLHFLRRASKAGEVDVEQHTLAKYLMELTLIDYDMVHYHPSKVAAAASCLSQKVLGQGKWNLKQQYYTGYTENEVLEVMQHMAKNVVKVNENLTKFIAIKNKYASSKLLKISMIPQLNSKAVKDLASPLIGRS</sequence>
<evidence type="ECO:0000269" key="1">
    <source ref="5"/>
</evidence>
<evidence type="ECO:0000305" key="2"/>
<evidence type="ECO:0007744" key="3">
    <source>
    </source>
</evidence>
<evidence type="ECO:0007744" key="4">
    <source>
    </source>
</evidence>
<evidence type="ECO:0007744" key="5">
    <source>
    </source>
</evidence>
<evidence type="ECO:0007744" key="6">
    <source>
    </source>
</evidence>
<evidence type="ECO:0007744" key="7">
    <source>
    </source>
</evidence>
<keyword id="KW-0131">Cell cycle</keyword>
<keyword id="KW-0132">Cell division</keyword>
<keyword id="KW-0195">Cyclin</keyword>
<keyword id="KW-0498">Mitosis</keyword>
<keyword id="KW-0597">Phosphoprotein</keyword>
<keyword id="KW-1267">Proteomics identification</keyword>
<keyword id="KW-1185">Reference proteome</keyword>
<gene>
    <name type="primary">CCNB2</name>
</gene>
<dbReference type="EMBL" id="AF002822">
    <property type="protein sequence ID" value="AAD09309.1"/>
    <property type="molecule type" value="mRNA"/>
</dbReference>
<dbReference type="EMBL" id="AB020981">
    <property type="protein sequence ID" value="BAA78387.1"/>
    <property type="molecule type" value="mRNA"/>
</dbReference>
<dbReference type="EMBL" id="AL080146">
    <property type="protein sequence ID" value="CAB45739.1"/>
    <property type="molecule type" value="mRNA"/>
</dbReference>
<dbReference type="EMBL" id="CR533527">
    <property type="protein sequence ID" value="CAG38558.1"/>
    <property type="molecule type" value="mRNA"/>
</dbReference>
<dbReference type="EMBL" id="AY864066">
    <property type="protein sequence ID" value="AAW34361.1"/>
    <property type="molecule type" value="Genomic_DNA"/>
</dbReference>
<dbReference type="EMBL" id="AK001404">
    <property type="protein sequence ID" value="BAG50905.1"/>
    <property type="molecule type" value="mRNA"/>
</dbReference>
<dbReference type="EMBL" id="CH471082">
    <property type="protein sequence ID" value="EAW77563.1"/>
    <property type="molecule type" value="Genomic_DNA"/>
</dbReference>
<dbReference type="EMBL" id="BC105086">
    <property type="protein sequence ID" value="AAI05087.1"/>
    <property type="molecule type" value="mRNA"/>
</dbReference>
<dbReference type="EMBL" id="BC105112">
    <property type="protein sequence ID" value="AAI05113.1"/>
    <property type="molecule type" value="mRNA"/>
</dbReference>
<dbReference type="CCDS" id="CCDS10170.1"/>
<dbReference type="PIR" id="T12530">
    <property type="entry name" value="T12530"/>
</dbReference>
<dbReference type="RefSeq" id="NP_004692.1">
    <property type="nucleotide sequence ID" value="NM_004701.4"/>
</dbReference>
<dbReference type="SMR" id="O95067"/>
<dbReference type="BioGRID" id="114581">
    <property type="interactions" value="68"/>
</dbReference>
<dbReference type="ComplexPortal" id="CPX-2008">
    <property type="entry name" value="Cyclin B2-CDK1 complex"/>
</dbReference>
<dbReference type="CORUM" id="O95067"/>
<dbReference type="DIP" id="DIP-31730N"/>
<dbReference type="FunCoup" id="O95067">
    <property type="interactions" value="1382"/>
</dbReference>
<dbReference type="IntAct" id="O95067">
    <property type="interactions" value="58"/>
</dbReference>
<dbReference type="MINT" id="O95067"/>
<dbReference type="STRING" id="9606.ENSP00000288207"/>
<dbReference type="BindingDB" id="O95067"/>
<dbReference type="ChEMBL" id="CHEMBL2094127"/>
<dbReference type="DrugCentral" id="O95067"/>
<dbReference type="TCDB" id="1.I.1.1.3">
    <property type="family name" value="the nuclear pore complex (npc) family"/>
</dbReference>
<dbReference type="GlyGen" id="O95067">
    <property type="glycosylation" value="1 site"/>
</dbReference>
<dbReference type="iPTMnet" id="O95067"/>
<dbReference type="MetOSite" id="O95067"/>
<dbReference type="PhosphoSitePlus" id="O95067"/>
<dbReference type="BioMuta" id="CCNB2"/>
<dbReference type="CPTAC" id="CPTAC-2794"/>
<dbReference type="CPTAC" id="CPTAC-2799"/>
<dbReference type="CPTAC" id="CPTAC-2800"/>
<dbReference type="jPOST" id="O95067"/>
<dbReference type="MassIVE" id="O95067"/>
<dbReference type="PaxDb" id="9606-ENSP00000288207"/>
<dbReference type="PeptideAtlas" id="O95067"/>
<dbReference type="ProteomicsDB" id="50636"/>
<dbReference type="Pumba" id="O95067"/>
<dbReference type="Antibodypedia" id="1393">
    <property type="antibodies" value="619 antibodies from 37 providers"/>
</dbReference>
<dbReference type="DNASU" id="9133"/>
<dbReference type="Ensembl" id="ENST00000288207.7">
    <property type="protein sequence ID" value="ENSP00000288207.2"/>
    <property type="gene ID" value="ENSG00000157456.8"/>
</dbReference>
<dbReference type="GeneID" id="9133"/>
<dbReference type="KEGG" id="hsa:9133"/>
<dbReference type="MANE-Select" id="ENST00000288207.7">
    <property type="protein sequence ID" value="ENSP00000288207.2"/>
    <property type="RefSeq nucleotide sequence ID" value="NM_004701.4"/>
    <property type="RefSeq protein sequence ID" value="NP_004692.1"/>
</dbReference>
<dbReference type="UCSC" id="uc002afz.4">
    <property type="organism name" value="human"/>
</dbReference>
<dbReference type="AGR" id="HGNC:1580"/>
<dbReference type="CTD" id="9133"/>
<dbReference type="DisGeNET" id="9133"/>
<dbReference type="GeneCards" id="CCNB2"/>
<dbReference type="HGNC" id="HGNC:1580">
    <property type="gene designation" value="CCNB2"/>
</dbReference>
<dbReference type="HPA" id="ENSG00000157456">
    <property type="expression patterns" value="Group enriched (bone marrow, lymphoid tissue, testis)"/>
</dbReference>
<dbReference type="MIM" id="602755">
    <property type="type" value="gene"/>
</dbReference>
<dbReference type="neXtProt" id="NX_O95067"/>
<dbReference type="OpenTargets" id="ENSG00000157456"/>
<dbReference type="PharmGKB" id="PA26148"/>
<dbReference type="VEuPathDB" id="HostDB:ENSG00000157456"/>
<dbReference type="eggNOG" id="KOG0653">
    <property type="taxonomic scope" value="Eukaryota"/>
</dbReference>
<dbReference type="GeneTree" id="ENSGT00940000155405"/>
<dbReference type="InParanoid" id="O95067"/>
<dbReference type="OMA" id="YYEMCHY"/>
<dbReference type="OrthoDB" id="5590282at2759"/>
<dbReference type="PAN-GO" id="O95067">
    <property type="GO annotations" value="7 GO annotations based on evolutionary models"/>
</dbReference>
<dbReference type="PhylomeDB" id="O95067"/>
<dbReference type="TreeFam" id="TF101001"/>
<dbReference type="PathwayCommons" id="O95067"/>
<dbReference type="Reactome" id="R-HSA-156711">
    <property type="pathway name" value="Polo-like kinase mediated events"/>
</dbReference>
<dbReference type="Reactome" id="R-HSA-162658">
    <property type="pathway name" value="Golgi Cisternae Pericentriolar Stack Reorganization"/>
</dbReference>
<dbReference type="Reactome" id="R-HSA-2500257">
    <property type="pathway name" value="Resolution of Sister Chromatid Cohesion"/>
</dbReference>
<dbReference type="Reactome" id="R-HSA-2514853">
    <property type="pathway name" value="Condensation of Prometaphase Chromosomes"/>
</dbReference>
<dbReference type="Reactome" id="R-HSA-2565942">
    <property type="pathway name" value="Regulation of PLK1 Activity at G2/M Transition"/>
</dbReference>
<dbReference type="Reactome" id="R-HSA-2980767">
    <property type="pathway name" value="Activation of NIMA Kinases NEK9, NEK6, NEK7"/>
</dbReference>
<dbReference type="Reactome" id="R-HSA-2995383">
    <property type="pathway name" value="Initiation of Nuclear Envelope (NE) Reformation"/>
</dbReference>
<dbReference type="Reactome" id="R-HSA-3301854">
    <property type="pathway name" value="Nuclear Pore Complex (NPC) Disassembly"/>
</dbReference>
<dbReference type="Reactome" id="R-HSA-69273">
    <property type="pathway name" value="Cyclin A/B1/B2 associated events during G2/M transition"/>
</dbReference>
<dbReference type="Reactome" id="R-HSA-69478">
    <property type="pathway name" value="G2/M DNA replication checkpoint"/>
</dbReference>
<dbReference type="Reactome" id="R-HSA-8852276">
    <property type="pathway name" value="The role of GTSE1 in G2/M progression after G2 checkpoint"/>
</dbReference>
<dbReference type="SignaLink" id="O95067"/>
<dbReference type="SIGNOR" id="O95067"/>
<dbReference type="BioGRID-ORCS" id="9133">
    <property type="hits" value="18 hits in 1182 CRISPR screens"/>
</dbReference>
<dbReference type="ChiTaRS" id="CCNB2">
    <property type="organism name" value="human"/>
</dbReference>
<dbReference type="GeneWiki" id="Cyclin_B2"/>
<dbReference type="GenomeRNAi" id="9133"/>
<dbReference type="Pharos" id="O95067">
    <property type="development level" value="Tbio"/>
</dbReference>
<dbReference type="PRO" id="PR:O95067"/>
<dbReference type="Proteomes" id="UP000005640">
    <property type="component" value="Chromosome 15"/>
</dbReference>
<dbReference type="RNAct" id="O95067">
    <property type="molecule type" value="protein"/>
</dbReference>
<dbReference type="Bgee" id="ENSG00000157456">
    <property type="expression patterns" value="Expressed in oocyte and 146 other cell types or tissues"/>
</dbReference>
<dbReference type="ExpressionAtlas" id="O95067">
    <property type="expression patterns" value="baseline and differential"/>
</dbReference>
<dbReference type="GO" id="GO:0005813">
    <property type="term" value="C:centrosome"/>
    <property type="evidence" value="ECO:0000314"/>
    <property type="project" value="UniProtKB"/>
</dbReference>
<dbReference type="GO" id="GO:0000307">
    <property type="term" value="C:cyclin-dependent protein kinase holoenzyme complex"/>
    <property type="evidence" value="ECO:0000318"/>
    <property type="project" value="GO_Central"/>
</dbReference>
<dbReference type="GO" id="GO:0005737">
    <property type="term" value="C:cytoplasm"/>
    <property type="evidence" value="ECO:0000318"/>
    <property type="project" value="GO_Central"/>
</dbReference>
<dbReference type="GO" id="GO:0005829">
    <property type="term" value="C:cytosol"/>
    <property type="evidence" value="ECO:0000314"/>
    <property type="project" value="HPA"/>
</dbReference>
<dbReference type="GO" id="GO:0016020">
    <property type="term" value="C:membrane"/>
    <property type="evidence" value="ECO:0007669"/>
    <property type="project" value="Ensembl"/>
</dbReference>
<dbReference type="GO" id="GO:0015630">
    <property type="term" value="C:microtubule cytoskeleton"/>
    <property type="evidence" value="ECO:0000314"/>
    <property type="project" value="LIFEdb"/>
</dbReference>
<dbReference type="GO" id="GO:0005815">
    <property type="term" value="C:microtubule organizing center"/>
    <property type="evidence" value="ECO:0000318"/>
    <property type="project" value="GO_Central"/>
</dbReference>
<dbReference type="GO" id="GO:0005634">
    <property type="term" value="C:nucleus"/>
    <property type="evidence" value="ECO:0000318"/>
    <property type="project" value="GO_Central"/>
</dbReference>
<dbReference type="GO" id="GO:0045296">
    <property type="term" value="F:cadherin binding"/>
    <property type="evidence" value="ECO:0007005"/>
    <property type="project" value="BHF-UCL"/>
</dbReference>
<dbReference type="GO" id="GO:0016538">
    <property type="term" value="F:cyclin-dependent protein serine/threonine kinase regulator activity"/>
    <property type="evidence" value="ECO:0000318"/>
    <property type="project" value="GO_Central"/>
</dbReference>
<dbReference type="GO" id="GO:0051301">
    <property type="term" value="P:cell division"/>
    <property type="evidence" value="ECO:0007669"/>
    <property type="project" value="UniProtKB-KW"/>
</dbReference>
<dbReference type="GO" id="GO:0000082">
    <property type="term" value="P:G1/S transition of mitotic cell cycle"/>
    <property type="evidence" value="ECO:0000318"/>
    <property type="project" value="GO_Central"/>
</dbReference>
<dbReference type="GO" id="GO:0008315">
    <property type="term" value="P:G2/MI transition of meiotic cell cycle"/>
    <property type="evidence" value="ECO:0007669"/>
    <property type="project" value="Ensembl"/>
</dbReference>
<dbReference type="GO" id="GO:0001701">
    <property type="term" value="P:in utero embryonic development"/>
    <property type="evidence" value="ECO:0007669"/>
    <property type="project" value="Ensembl"/>
</dbReference>
<dbReference type="GO" id="GO:0040008">
    <property type="term" value="P:regulation of growth"/>
    <property type="evidence" value="ECO:0007669"/>
    <property type="project" value="Ensembl"/>
</dbReference>
<dbReference type="GO" id="GO:0007057">
    <property type="term" value="P:spindle assembly involved in female meiosis I"/>
    <property type="evidence" value="ECO:0007669"/>
    <property type="project" value="Ensembl"/>
</dbReference>
<dbReference type="GO" id="GO:0043029">
    <property type="term" value="P:T cell homeostasis"/>
    <property type="evidence" value="ECO:0007669"/>
    <property type="project" value="Ensembl"/>
</dbReference>
<dbReference type="GO" id="GO:0048538">
    <property type="term" value="P:thymus development"/>
    <property type="evidence" value="ECO:0007669"/>
    <property type="project" value="Ensembl"/>
</dbReference>
<dbReference type="CDD" id="cd20566">
    <property type="entry name" value="CYCLIN_CCNB2_rpt1"/>
    <property type="match status" value="1"/>
</dbReference>
<dbReference type="CDD" id="cd20570">
    <property type="entry name" value="CYCLIN_CCNB2_rpt2"/>
    <property type="match status" value="1"/>
</dbReference>
<dbReference type="FunFam" id="1.10.472.10:FF:000027">
    <property type="entry name" value="G2/mitotic-specific cyclin-B1"/>
    <property type="match status" value="1"/>
</dbReference>
<dbReference type="Gene3D" id="1.10.472.10">
    <property type="entry name" value="Cyclin-like"/>
    <property type="match status" value="2"/>
</dbReference>
<dbReference type="InterPro" id="IPR039361">
    <property type="entry name" value="Cyclin"/>
</dbReference>
<dbReference type="InterPro" id="IPR013763">
    <property type="entry name" value="Cyclin-like_dom"/>
</dbReference>
<dbReference type="InterPro" id="IPR036915">
    <property type="entry name" value="Cyclin-like_sf"/>
</dbReference>
<dbReference type="InterPro" id="IPR046965">
    <property type="entry name" value="Cyclin_A/B-like"/>
</dbReference>
<dbReference type="InterPro" id="IPR004367">
    <property type="entry name" value="Cyclin_C-dom"/>
</dbReference>
<dbReference type="InterPro" id="IPR006671">
    <property type="entry name" value="Cyclin_N"/>
</dbReference>
<dbReference type="InterPro" id="IPR048258">
    <property type="entry name" value="Cyclins_cyclin-box"/>
</dbReference>
<dbReference type="PANTHER" id="PTHR10177">
    <property type="entry name" value="CYCLINS"/>
    <property type="match status" value="1"/>
</dbReference>
<dbReference type="Pfam" id="PF02984">
    <property type="entry name" value="Cyclin_C"/>
    <property type="match status" value="1"/>
</dbReference>
<dbReference type="Pfam" id="PF00134">
    <property type="entry name" value="Cyclin_N"/>
    <property type="match status" value="1"/>
</dbReference>
<dbReference type="PIRSF" id="PIRSF001771">
    <property type="entry name" value="Cyclin_A_B_D_E"/>
    <property type="match status" value="1"/>
</dbReference>
<dbReference type="SMART" id="SM00385">
    <property type="entry name" value="CYCLIN"/>
    <property type="match status" value="2"/>
</dbReference>
<dbReference type="SMART" id="SM01332">
    <property type="entry name" value="Cyclin_C"/>
    <property type="match status" value="1"/>
</dbReference>
<dbReference type="SUPFAM" id="SSF47954">
    <property type="entry name" value="Cyclin-like"/>
    <property type="match status" value="2"/>
</dbReference>
<dbReference type="PROSITE" id="PS00292">
    <property type="entry name" value="CYCLINS"/>
    <property type="match status" value="1"/>
</dbReference>
<feature type="chain" id="PRO_0000080361" description="G2/mitotic-specific cyclin-B2">
    <location>
        <begin position="1"/>
        <end position="398"/>
    </location>
</feature>
<feature type="modified residue" description="Phosphothreonine" evidence="7">
    <location>
        <position position="8"/>
    </location>
</feature>
<feature type="modified residue" description="Phosphoserine" evidence="7">
    <location>
        <position position="11"/>
    </location>
</feature>
<feature type="modified residue" description="Phosphoserine" evidence="7">
    <location>
        <position position="77"/>
    </location>
</feature>
<feature type="modified residue" description="Phosphoserine" evidence="3 6 7">
    <location>
        <position position="92"/>
    </location>
</feature>
<feature type="modified residue" description="Phosphothreonine" evidence="3">
    <location>
        <position position="94"/>
    </location>
</feature>
<feature type="modified residue" description="Phosphoserine" evidence="3 4">
    <location>
        <position position="99"/>
    </location>
</feature>
<feature type="modified residue" description="Phosphoserine" evidence="4 7">
    <location>
        <position position="392"/>
    </location>
</feature>
<feature type="modified residue" description="Phosphoserine" evidence="3 4 5 6 7">
    <location>
        <position position="398"/>
    </location>
</feature>
<feature type="sequence variant" id="VAR_022221" description="In dbSNP:rs16941036." evidence="1">
    <original>M</original>
    <variation>T</variation>
    <location>
        <position position="100"/>
    </location>
</feature>
<feature type="sequence variant" id="VAR_053052" description="In dbSNP:rs2306785.">
    <original>V</original>
    <variation>I</variation>
    <location>
        <position position="135"/>
    </location>
</feature>
<feature type="sequence variant" id="VAR_022222" description="In dbSNP:rs28383563." evidence="1">
    <original>I</original>
    <variation>T</variation>
    <location>
        <position position="395"/>
    </location>
</feature>
<proteinExistence type="evidence at protein level"/>
<reference key="1">
    <citation type="submission" date="1997-05" db="EMBL/GenBank/DDBJ databases">
        <authorList>
            <person name="Kim D.G."/>
            <person name="Choi S.S."/>
            <person name="Kang Y.S."/>
            <person name="Lee K.H."/>
            <person name="Kim U.-J."/>
            <person name="Shin H.-S."/>
        </authorList>
    </citation>
    <scope>NUCLEOTIDE SEQUENCE [MRNA]</scope>
</reference>
<reference key="2">
    <citation type="submission" date="1998-12" db="EMBL/GenBank/DDBJ databases">
        <title>G2/mitotic-specific cyclin B2.</title>
        <authorList>
            <person name="Saito T."/>
            <person name="Miyajima N."/>
        </authorList>
    </citation>
    <scope>NUCLEOTIDE SEQUENCE [MRNA]</scope>
</reference>
<reference key="3">
    <citation type="journal article" date="2001" name="Genome Res.">
        <title>Towards a catalog of human genes and proteins: sequencing and analysis of 500 novel complete protein coding human cDNAs.</title>
        <authorList>
            <person name="Wiemann S."/>
            <person name="Weil B."/>
            <person name="Wellenreuther R."/>
            <person name="Gassenhuber J."/>
            <person name="Glassl S."/>
            <person name="Ansorge W."/>
            <person name="Boecher M."/>
            <person name="Bloecker H."/>
            <person name="Bauersachs S."/>
            <person name="Blum H."/>
            <person name="Lauber J."/>
            <person name="Duesterhoeft A."/>
            <person name="Beyer A."/>
            <person name="Koehrer K."/>
            <person name="Strack N."/>
            <person name="Mewes H.-W."/>
            <person name="Ottenwaelder B."/>
            <person name="Obermaier B."/>
            <person name="Tampe J."/>
            <person name="Heubner D."/>
            <person name="Wambutt R."/>
            <person name="Korn B."/>
            <person name="Klein M."/>
            <person name="Poustka A."/>
        </authorList>
    </citation>
    <scope>NUCLEOTIDE SEQUENCE [LARGE SCALE MRNA]</scope>
    <source>
        <tissue>Testis</tissue>
    </source>
</reference>
<reference key="4">
    <citation type="submission" date="2004-06" db="EMBL/GenBank/DDBJ databases">
        <title>Cloning of human full open reading frames in Gateway(TM) system entry vector (pDONR201).</title>
        <authorList>
            <person name="Ebert L."/>
            <person name="Schick M."/>
            <person name="Neubert P."/>
            <person name="Schatten R."/>
            <person name="Henze S."/>
            <person name="Korn B."/>
        </authorList>
    </citation>
    <scope>NUCLEOTIDE SEQUENCE [LARGE SCALE MRNA]</scope>
</reference>
<reference key="5">
    <citation type="submission" date="2004-12" db="EMBL/GenBank/DDBJ databases">
        <authorList>
            <consortium name="NIEHS SNPs program"/>
        </authorList>
    </citation>
    <scope>NUCLEOTIDE SEQUENCE [GENOMIC DNA]</scope>
    <scope>VARIANTS THR-100 AND THR-395</scope>
</reference>
<reference key="6">
    <citation type="journal article" date="2004" name="Nat. Genet.">
        <title>Complete sequencing and characterization of 21,243 full-length human cDNAs.</title>
        <authorList>
            <person name="Ota T."/>
            <person name="Suzuki Y."/>
            <person name="Nishikawa T."/>
            <person name="Otsuki T."/>
            <person name="Sugiyama T."/>
            <person name="Irie R."/>
            <person name="Wakamatsu A."/>
            <person name="Hayashi K."/>
            <person name="Sato H."/>
            <person name="Nagai K."/>
            <person name="Kimura K."/>
            <person name="Makita H."/>
            <person name="Sekine M."/>
            <person name="Obayashi M."/>
            <person name="Nishi T."/>
            <person name="Shibahara T."/>
            <person name="Tanaka T."/>
            <person name="Ishii S."/>
            <person name="Yamamoto J."/>
            <person name="Saito K."/>
            <person name="Kawai Y."/>
            <person name="Isono Y."/>
            <person name="Nakamura Y."/>
            <person name="Nagahari K."/>
            <person name="Murakami K."/>
            <person name="Yasuda T."/>
            <person name="Iwayanagi T."/>
            <person name="Wagatsuma M."/>
            <person name="Shiratori A."/>
            <person name="Sudo H."/>
            <person name="Hosoiri T."/>
            <person name="Kaku Y."/>
            <person name="Kodaira H."/>
            <person name="Kondo H."/>
            <person name="Sugawara M."/>
            <person name="Takahashi M."/>
            <person name="Kanda K."/>
            <person name="Yokoi T."/>
            <person name="Furuya T."/>
            <person name="Kikkawa E."/>
            <person name="Omura Y."/>
            <person name="Abe K."/>
            <person name="Kamihara K."/>
            <person name="Katsuta N."/>
            <person name="Sato K."/>
            <person name="Tanikawa M."/>
            <person name="Yamazaki M."/>
            <person name="Ninomiya K."/>
            <person name="Ishibashi T."/>
            <person name="Yamashita H."/>
            <person name="Murakawa K."/>
            <person name="Fujimori K."/>
            <person name="Tanai H."/>
            <person name="Kimata M."/>
            <person name="Watanabe M."/>
            <person name="Hiraoka S."/>
            <person name="Chiba Y."/>
            <person name="Ishida S."/>
            <person name="Ono Y."/>
            <person name="Takiguchi S."/>
            <person name="Watanabe S."/>
            <person name="Yosida M."/>
            <person name="Hotuta T."/>
            <person name="Kusano J."/>
            <person name="Kanehori K."/>
            <person name="Takahashi-Fujii A."/>
            <person name="Hara H."/>
            <person name="Tanase T.-O."/>
            <person name="Nomura Y."/>
            <person name="Togiya S."/>
            <person name="Komai F."/>
            <person name="Hara R."/>
            <person name="Takeuchi K."/>
            <person name="Arita M."/>
            <person name="Imose N."/>
            <person name="Musashino K."/>
            <person name="Yuuki H."/>
            <person name="Oshima A."/>
            <person name="Sasaki N."/>
            <person name="Aotsuka S."/>
            <person name="Yoshikawa Y."/>
            <person name="Matsunawa H."/>
            <person name="Ichihara T."/>
            <person name="Shiohata N."/>
            <person name="Sano S."/>
            <person name="Moriya S."/>
            <person name="Momiyama H."/>
            <person name="Satoh N."/>
            <person name="Takami S."/>
            <person name="Terashima Y."/>
            <person name="Suzuki O."/>
            <person name="Nakagawa S."/>
            <person name="Senoh A."/>
            <person name="Mizoguchi H."/>
            <person name="Goto Y."/>
            <person name="Shimizu F."/>
            <person name="Wakebe H."/>
            <person name="Hishigaki H."/>
            <person name="Watanabe T."/>
            <person name="Sugiyama A."/>
            <person name="Takemoto M."/>
            <person name="Kawakami B."/>
            <person name="Yamazaki M."/>
            <person name="Watanabe K."/>
            <person name="Kumagai A."/>
            <person name="Itakura S."/>
            <person name="Fukuzumi Y."/>
            <person name="Fujimori Y."/>
            <person name="Komiyama M."/>
            <person name="Tashiro H."/>
            <person name="Tanigami A."/>
            <person name="Fujiwara T."/>
            <person name="Ono T."/>
            <person name="Yamada K."/>
            <person name="Fujii Y."/>
            <person name="Ozaki K."/>
            <person name="Hirao M."/>
            <person name="Ohmori Y."/>
            <person name="Kawabata A."/>
            <person name="Hikiji T."/>
            <person name="Kobatake N."/>
            <person name="Inagaki H."/>
            <person name="Ikema Y."/>
            <person name="Okamoto S."/>
            <person name="Okitani R."/>
            <person name="Kawakami T."/>
            <person name="Noguchi S."/>
            <person name="Itoh T."/>
            <person name="Shigeta K."/>
            <person name="Senba T."/>
            <person name="Matsumura K."/>
            <person name="Nakajima Y."/>
            <person name="Mizuno T."/>
            <person name="Morinaga M."/>
            <person name="Sasaki M."/>
            <person name="Togashi T."/>
            <person name="Oyama M."/>
            <person name="Hata H."/>
            <person name="Watanabe M."/>
            <person name="Komatsu T."/>
            <person name="Mizushima-Sugano J."/>
            <person name="Satoh T."/>
            <person name="Shirai Y."/>
            <person name="Takahashi Y."/>
            <person name="Nakagawa K."/>
            <person name="Okumura K."/>
            <person name="Nagase T."/>
            <person name="Nomura N."/>
            <person name="Kikuchi H."/>
            <person name="Masuho Y."/>
            <person name="Yamashita R."/>
            <person name="Nakai K."/>
            <person name="Yada T."/>
            <person name="Nakamura Y."/>
            <person name="Ohara O."/>
            <person name="Isogai T."/>
            <person name="Sugano S."/>
        </authorList>
    </citation>
    <scope>NUCLEOTIDE SEQUENCE [LARGE SCALE MRNA]</scope>
</reference>
<reference key="7">
    <citation type="submission" date="2005-07" db="EMBL/GenBank/DDBJ databases">
        <authorList>
            <person name="Mural R.J."/>
            <person name="Istrail S."/>
            <person name="Sutton G.G."/>
            <person name="Florea L."/>
            <person name="Halpern A.L."/>
            <person name="Mobarry C.M."/>
            <person name="Lippert R."/>
            <person name="Walenz B."/>
            <person name="Shatkay H."/>
            <person name="Dew I."/>
            <person name="Miller J.R."/>
            <person name="Flanigan M.J."/>
            <person name="Edwards N.J."/>
            <person name="Bolanos R."/>
            <person name="Fasulo D."/>
            <person name="Halldorsson B.V."/>
            <person name="Hannenhalli S."/>
            <person name="Turner R."/>
            <person name="Yooseph S."/>
            <person name="Lu F."/>
            <person name="Nusskern D.R."/>
            <person name="Shue B.C."/>
            <person name="Zheng X.H."/>
            <person name="Zhong F."/>
            <person name="Delcher A.L."/>
            <person name="Huson D.H."/>
            <person name="Kravitz S.A."/>
            <person name="Mouchard L."/>
            <person name="Reinert K."/>
            <person name="Remington K.A."/>
            <person name="Clark A.G."/>
            <person name="Waterman M.S."/>
            <person name="Eichler E.E."/>
            <person name="Adams M.D."/>
            <person name="Hunkapiller M.W."/>
            <person name="Myers E.W."/>
            <person name="Venter J.C."/>
        </authorList>
    </citation>
    <scope>NUCLEOTIDE SEQUENCE [LARGE SCALE GENOMIC DNA]</scope>
</reference>
<reference key="8">
    <citation type="journal article" date="2004" name="Genome Res.">
        <title>The status, quality, and expansion of the NIH full-length cDNA project: the Mammalian Gene Collection (MGC).</title>
        <authorList>
            <consortium name="The MGC Project Team"/>
        </authorList>
    </citation>
    <scope>NUCLEOTIDE SEQUENCE [LARGE SCALE MRNA]</scope>
    <source>
        <tissue>Brain</tissue>
    </source>
</reference>
<reference key="9">
    <citation type="journal article" date="2008" name="Mol. Cell">
        <title>Kinase-selective enrichment enables quantitative phosphoproteomics of the kinome across the cell cycle.</title>
        <authorList>
            <person name="Daub H."/>
            <person name="Olsen J.V."/>
            <person name="Bairlein M."/>
            <person name="Gnad F."/>
            <person name="Oppermann F.S."/>
            <person name="Korner R."/>
            <person name="Greff Z."/>
            <person name="Keri G."/>
            <person name="Stemmann O."/>
            <person name="Mann M."/>
        </authorList>
    </citation>
    <scope>PHOSPHORYLATION [LARGE SCALE ANALYSIS] AT SER-99; SER-392 AND SER-398</scope>
    <scope>IDENTIFICATION BY MASS SPECTROMETRY [LARGE SCALE ANALYSIS]</scope>
    <source>
        <tissue>Cervix carcinoma</tissue>
    </source>
</reference>
<reference key="10">
    <citation type="journal article" date="2008" name="Proc. Natl. Acad. Sci. U.S.A.">
        <title>A quantitative atlas of mitotic phosphorylation.</title>
        <authorList>
            <person name="Dephoure N."/>
            <person name="Zhou C."/>
            <person name="Villen J."/>
            <person name="Beausoleil S.A."/>
            <person name="Bakalarski C.E."/>
            <person name="Elledge S.J."/>
            <person name="Gygi S.P."/>
        </authorList>
    </citation>
    <scope>PHOSPHORYLATION [LARGE SCALE ANALYSIS] AT SER-92; THR-94; SER-99 AND SER-398</scope>
    <scope>IDENTIFICATION BY MASS SPECTROMETRY [LARGE SCALE ANALYSIS]</scope>
    <source>
        <tissue>Cervix carcinoma</tissue>
    </source>
</reference>
<reference key="11">
    <citation type="journal article" date="2009" name="Anal. Chem.">
        <title>Lys-N and trypsin cover complementary parts of the phosphoproteome in a refined SCX-based approach.</title>
        <authorList>
            <person name="Gauci S."/>
            <person name="Helbig A.O."/>
            <person name="Slijper M."/>
            <person name="Krijgsveld J."/>
            <person name="Heck A.J."/>
            <person name="Mohammed S."/>
        </authorList>
    </citation>
    <scope>IDENTIFICATION BY MASS SPECTROMETRY [LARGE SCALE ANALYSIS]</scope>
</reference>
<reference key="12">
    <citation type="journal article" date="2009" name="Mol. Cell. Proteomics">
        <title>Large-scale proteomics analysis of the human kinome.</title>
        <authorList>
            <person name="Oppermann F.S."/>
            <person name="Gnad F."/>
            <person name="Olsen J.V."/>
            <person name="Hornberger R."/>
            <person name="Greff Z."/>
            <person name="Keri G."/>
            <person name="Mann M."/>
            <person name="Daub H."/>
        </authorList>
    </citation>
    <scope>PHOSPHORYLATION [LARGE SCALE ANALYSIS] AT SER-398</scope>
    <scope>IDENTIFICATION BY MASS SPECTROMETRY [LARGE SCALE ANALYSIS]</scope>
</reference>
<reference key="13">
    <citation type="journal article" date="2010" name="Sci. Signal.">
        <title>Quantitative phosphoproteomics reveals widespread full phosphorylation site occupancy during mitosis.</title>
        <authorList>
            <person name="Olsen J.V."/>
            <person name="Vermeulen M."/>
            <person name="Santamaria A."/>
            <person name="Kumar C."/>
            <person name="Miller M.L."/>
            <person name="Jensen L.J."/>
            <person name="Gnad F."/>
            <person name="Cox J."/>
            <person name="Jensen T.S."/>
            <person name="Nigg E.A."/>
            <person name="Brunak S."/>
            <person name="Mann M."/>
        </authorList>
    </citation>
    <scope>PHOSPHORYLATION [LARGE SCALE ANALYSIS] AT SER-92 AND SER-398</scope>
    <scope>IDENTIFICATION BY MASS SPECTROMETRY [LARGE SCALE ANALYSIS]</scope>
    <source>
        <tissue>Cervix carcinoma</tissue>
    </source>
</reference>
<reference key="14">
    <citation type="journal article" date="2011" name="BMC Syst. Biol.">
        <title>Initial characterization of the human central proteome.</title>
        <authorList>
            <person name="Burkard T.R."/>
            <person name="Planyavsky M."/>
            <person name="Kaupe I."/>
            <person name="Breitwieser F.P."/>
            <person name="Buerckstuemmer T."/>
            <person name="Bennett K.L."/>
            <person name="Superti-Furga G."/>
            <person name="Colinge J."/>
        </authorList>
    </citation>
    <scope>IDENTIFICATION BY MASS SPECTROMETRY [LARGE SCALE ANALYSIS]</scope>
</reference>
<reference key="15">
    <citation type="journal article" date="2013" name="J. Proteome Res.">
        <title>Toward a comprehensive characterization of a human cancer cell phosphoproteome.</title>
        <authorList>
            <person name="Zhou H."/>
            <person name="Di Palma S."/>
            <person name="Preisinger C."/>
            <person name="Peng M."/>
            <person name="Polat A.N."/>
            <person name="Heck A.J."/>
            <person name="Mohammed S."/>
        </authorList>
    </citation>
    <scope>PHOSPHORYLATION [LARGE SCALE ANALYSIS] AT THR-8; SER-11; SER-77; SER-92; SER-392 AND SER-398</scope>
    <scope>IDENTIFICATION BY MASS SPECTROMETRY [LARGE SCALE ANALYSIS]</scope>
    <source>
        <tissue>Cervix carcinoma</tissue>
        <tissue>Erythroleukemia</tissue>
    </source>
</reference>
<accession>O95067</accession>
<accession>B3KM93</accession>
<accession>Q6FI99</accession>